<evidence type="ECO:0000250" key="1">
    <source>
        <dbReference type="UniProtKB" id="G0SCU5"/>
    </source>
</evidence>
<evidence type="ECO:0000250" key="2">
    <source>
        <dbReference type="UniProtKB" id="P11484"/>
    </source>
</evidence>
<evidence type="ECO:0000305" key="3"/>
<feature type="chain" id="PRO_0000078366" description="Ribosome-associated molecular chaperone SSB1">
    <location>
        <begin position="1"/>
        <end position="613"/>
    </location>
</feature>
<feature type="region of interest" description="Nucleotide binding domain (NBD)" evidence="1">
    <location>
        <begin position="1"/>
        <end position="391"/>
    </location>
</feature>
<feature type="region of interest" description="Inter-domain linker" evidence="1">
    <location>
        <begin position="392"/>
        <end position="402"/>
    </location>
</feature>
<feature type="region of interest" description="Substrate binding domain (SBD)" evidence="1">
    <location>
        <begin position="403"/>
        <end position="613"/>
    </location>
</feature>
<feature type="region of interest" description="Lid domain (SBDalpha)" evidence="1">
    <location>
        <begin position="516"/>
        <end position="612"/>
    </location>
</feature>
<feature type="short sequence motif" description="Nuclear export signal" evidence="2">
    <location>
        <begin position="574"/>
        <end position="582"/>
    </location>
</feature>
<feature type="binding site" evidence="1">
    <location>
        <begin position="16"/>
        <end position="18"/>
    </location>
    <ligand>
        <name>ATP</name>
        <dbReference type="ChEBI" id="CHEBI:30616"/>
    </ligand>
</feature>
<feature type="binding site" evidence="1">
    <location>
        <position position="73"/>
    </location>
    <ligand>
        <name>ATP</name>
        <dbReference type="ChEBI" id="CHEBI:30616"/>
    </ligand>
</feature>
<feature type="binding site" evidence="1">
    <location>
        <begin position="205"/>
        <end position="207"/>
    </location>
    <ligand>
        <name>ATP</name>
        <dbReference type="ChEBI" id="CHEBI:30616"/>
    </ligand>
</feature>
<feature type="binding site" evidence="1">
    <location>
        <begin position="271"/>
        <end position="278"/>
    </location>
    <ligand>
        <name>ATP</name>
        <dbReference type="ChEBI" id="CHEBI:30616"/>
    </ligand>
</feature>
<feature type="binding site" evidence="1">
    <location>
        <position position="342"/>
    </location>
    <ligand>
        <name>ATP</name>
        <dbReference type="ChEBI" id="CHEBI:30616"/>
    </ligand>
</feature>
<feature type="sequence conflict" description="In Ref. 1; CAA66308." evidence="3" ref="1">
    <original>K</original>
    <variation>E</variation>
    <location>
        <position position="325"/>
    </location>
</feature>
<feature type="sequence conflict" description="In Ref. 1; CAA66308." evidence="3" ref="1">
    <original>F</original>
    <variation>L</variation>
    <location>
        <position position="414"/>
    </location>
</feature>
<feature type="sequence conflict" description="In Ref. 1; CAA66308." evidence="3" ref="1">
    <original>T</original>
    <variation>S</variation>
    <location>
        <position position="455"/>
    </location>
</feature>
<organism>
    <name type="scientific">Candida albicans (strain WO-1)</name>
    <name type="common">Yeast</name>
    <dbReference type="NCBI Taxonomy" id="294748"/>
    <lineage>
        <taxon>Eukaryota</taxon>
        <taxon>Fungi</taxon>
        <taxon>Dikarya</taxon>
        <taxon>Ascomycota</taxon>
        <taxon>Saccharomycotina</taxon>
        <taxon>Pichiomycetes</taxon>
        <taxon>Debaryomycetaceae</taxon>
        <taxon>Candida/Lodderomyces clade</taxon>
        <taxon>Candida</taxon>
    </lineage>
</organism>
<name>SSB1_CANAW</name>
<reference key="1">
    <citation type="journal article" date="1997" name="Yeast">
        <title>Molecular cloning of a Candida albicans gene (SSB1) coding for a protein related to the Hsp70 family.</title>
        <authorList>
            <person name="Maneu V."/>
            <person name="Cervera A.M."/>
            <person name="Martinez J.P."/>
            <person name="Gozalbo D."/>
        </authorList>
    </citation>
    <scope>NUCLEOTIDE SEQUENCE [GENOMIC DNA]</scope>
    <source>
        <strain>WO-1</strain>
    </source>
</reference>
<reference key="2">
    <citation type="journal article" date="2009" name="Nature">
        <title>Evolution of pathogenicity and sexual reproduction in eight Candida genomes.</title>
        <authorList>
            <person name="Butler G."/>
            <person name="Rasmussen M.D."/>
            <person name="Lin M.F."/>
            <person name="Santos M.A.S."/>
            <person name="Sakthikumar S."/>
            <person name="Munro C.A."/>
            <person name="Rheinbay E."/>
            <person name="Grabherr M."/>
            <person name="Forche A."/>
            <person name="Reedy J.L."/>
            <person name="Agrafioti I."/>
            <person name="Arnaud M.B."/>
            <person name="Bates S."/>
            <person name="Brown A.J.P."/>
            <person name="Brunke S."/>
            <person name="Costanzo M.C."/>
            <person name="Fitzpatrick D.A."/>
            <person name="de Groot P.W.J."/>
            <person name="Harris D."/>
            <person name="Hoyer L.L."/>
            <person name="Hube B."/>
            <person name="Klis F.M."/>
            <person name="Kodira C."/>
            <person name="Lennard N."/>
            <person name="Logue M.E."/>
            <person name="Martin R."/>
            <person name="Neiman A.M."/>
            <person name="Nikolaou E."/>
            <person name="Quail M.A."/>
            <person name="Quinn J."/>
            <person name="Santos M.C."/>
            <person name="Schmitzberger F.F."/>
            <person name="Sherlock G."/>
            <person name="Shah P."/>
            <person name="Silverstein K.A.T."/>
            <person name="Skrzypek M.S."/>
            <person name="Soll D."/>
            <person name="Staggs R."/>
            <person name="Stansfield I."/>
            <person name="Stumpf M.P.H."/>
            <person name="Sudbery P.E."/>
            <person name="Srikantha T."/>
            <person name="Zeng Q."/>
            <person name="Berman J."/>
            <person name="Berriman M."/>
            <person name="Heitman J."/>
            <person name="Gow N.A.R."/>
            <person name="Lorenz M.C."/>
            <person name="Birren B.W."/>
            <person name="Kellis M."/>
            <person name="Cuomo C.A."/>
        </authorList>
    </citation>
    <scope>NUCLEOTIDE SEQUENCE [LARGE SCALE GENOMIC DNA]</scope>
    <source>
        <strain>WO-1</strain>
    </source>
</reference>
<dbReference type="EC" id="3.6.4.10"/>
<dbReference type="EMBL" id="X97723">
    <property type="protein sequence ID" value="CAA66308.1"/>
    <property type="molecule type" value="Genomic_DNA"/>
</dbReference>
<dbReference type="EMBL" id="CM000309">
    <property type="protein sequence ID" value="EEQ43849.1"/>
    <property type="molecule type" value="Genomic_DNA"/>
</dbReference>
<dbReference type="SMR" id="P87222"/>
<dbReference type="PaxDb" id="5476-P87222"/>
<dbReference type="VEuPathDB" id="FungiDB:CAWG_02101"/>
<dbReference type="HOGENOM" id="CLU_005965_2_1_1"/>
<dbReference type="OMA" id="NIPPMQA"/>
<dbReference type="OrthoDB" id="6175at766764"/>
<dbReference type="Proteomes" id="UP000001429">
    <property type="component" value="Chromosome R"/>
</dbReference>
<dbReference type="GO" id="GO:0005737">
    <property type="term" value="C:cytoplasm"/>
    <property type="evidence" value="ECO:0007669"/>
    <property type="project" value="UniProtKB-SubCell"/>
</dbReference>
<dbReference type="GO" id="GO:0005524">
    <property type="term" value="F:ATP binding"/>
    <property type="evidence" value="ECO:0007669"/>
    <property type="project" value="UniProtKB-KW"/>
</dbReference>
<dbReference type="GO" id="GO:0016887">
    <property type="term" value="F:ATP hydrolysis activity"/>
    <property type="evidence" value="ECO:0007669"/>
    <property type="project" value="RHEA"/>
</dbReference>
<dbReference type="GO" id="GO:0140662">
    <property type="term" value="F:ATP-dependent protein folding chaperone"/>
    <property type="evidence" value="ECO:0007669"/>
    <property type="project" value="InterPro"/>
</dbReference>
<dbReference type="GO" id="GO:0006412">
    <property type="term" value="P:translation"/>
    <property type="evidence" value="ECO:0007669"/>
    <property type="project" value="UniProtKB-KW"/>
</dbReference>
<dbReference type="CDD" id="cd24093">
    <property type="entry name" value="ASKHA_NBD_HSP70_Ssb"/>
    <property type="match status" value="1"/>
</dbReference>
<dbReference type="FunFam" id="3.90.640.10:FF:000002">
    <property type="entry name" value="Heat shock 70 kDa"/>
    <property type="match status" value="1"/>
</dbReference>
<dbReference type="FunFam" id="3.30.420.40:FF:000172">
    <property type="entry name" value="Heat shock 70 kDa protein"/>
    <property type="match status" value="2"/>
</dbReference>
<dbReference type="FunFam" id="1.20.1270.10:FF:000014">
    <property type="entry name" value="Heat shock protein 70"/>
    <property type="match status" value="1"/>
</dbReference>
<dbReference type="FunFam" id="3.30.420.40:FF:000026">
    <property type="entry name" value="Heat shock protein 70"/>
    <property type="match status" value="1"/>
</dbReference>
<dbReference type="FunFam" id="2.60.34.10:FF:000004">
    <property type="entry name" value="Heat shock protein SSB1"/>
    <property type="match status" value="1"/>
</dbReference>
<dbReference type="FunFam" id="3.30.30.30:FF:000005">
    <property type="entry name" value="Heat shock protein ssb1"/>
    <property type="match status" value="1"/>
</dbReference>
<dbReference type="Gene3D" id="1.20.1270.10">
    <property type="match status" value="1"/>
</dbReference>
<dbReference type="Gene3D" id="3.30.420.40">
    <property type="match status" value="2"/>
</dbReference>
<dbReference type="Gene3D" id="3.90.640.10">
    <property type="entry name" value="Actin, Chain A, domain 4"/>
    <property type="match status" value="1"/>
</dbReference>
<dbReference type="Gene3D" id="2.60.34.10">
    <property type="entry name" value="Substrate Binding Domain Of DNAk, Chain A, domain 1"/>
    <property type="match status" value="1"/>
</dbReference>
<dbReference type="InterPro" id="IPR043129">
    <property type="entry name" value="ATPase_NBD"/>
</dbReference>
<dbReference type="InterPro" id="IPR018181">
    <property type="entry name" value="Heat_shock_70_CS"/>
</dbReference>
<dbReference type="InterPro" id="IPR029048">
    <property type="entry name" value="HSP70_C_sf"/>
</dbReference>
<dbReference type="InterPro" id="IPR029047">
    <property type="entry name" value="HSP70_peptide-bd_sf"/>
</dbReference>
<dbReference type="InterPro" id="IPR013126">
    <property type="entry name" value="Hsp_70_fam"/>
</dbReference>
<dbReference type="NCBIfam" id="NF001413">
    <property type="entry name" value="PRK00290.1"/>
    <property type="match status" value="1"/>
</dbReference>
<dbReference type="PANTHER" id="PTHR19375">
    <property type="entry name" value="HEAT SHOCK PROTEIN 70KDA"/>
    <property type="match status" value="1"/>
</dbReference>
<dbReference type="Pfam" id="PF00012">
    <property type="entry name" value="HSP70"/>
    <property type="match status" value="1"/>
</dbReference>
<dbReference type="PRINTS" id="PR00301">
    <property type="entry name" value="HEATSHOCK70"/>
</dbReference>
<dbReference type="SUPFAM" id="SSF53067">
    <property type="entry name" value="Actin-like ATPase domain"/>
    <property type="match status" value="2"/>
</dbReference>
<dbReference type="SUPFAM" id="SSF100934">
    <property type="entry name" value="Heat shock protein 70kD (HSP70), C-terminal subdomain"/>
    <property type="match status" value="1"/>
</dbReference>
<dbReference type="SUPFAM" id="SSF100920">
    <property type="entry name" value="Heat shock protein 70kD (HSP70), peptide-binding domain"/>
    <property type="match status" value="1"/>
</dbReference>
<dbReference type="PROSITE" id="PS00297">
    <property type="entry name" value="HSP70_1"/>
    <property type="match status" value="1"/>
</dbReference>
<dbReference type="PROSITE" id="PS00329">
    <property type="entry name" value="HSP70_2"/>
    <property type="match status" value="1"/>
</dbReference>
<dbReference type="PROSITE" id="PS01036">
    <property type="entry name" value="HSP70_3"/>
    <property type="match status" value="1"/>
</dbReference>
<proteinExistence type="inferred from homology"/>
<comment type="function">
    <text evidence="2">Ribosome-bound, Hsp70-type chaperone that assists in the cotranslational folding of newly synthesized proteins in the cytosol. Stimulates folding by interacting with nascent chains, binding to short, largely hydrophobic sequences exposed by unfolded proteins, thereby stabilizing longer, more slowly translated, and aggregation-prone nascent polypeptides and domains that cannot fold stably until fully synthesized. The Hsp70-protein substrate interaction depends on ATP-binding and on allosteric regulation between the NBD and the SBD. The ATP-bound state is characterized by a fast exchange rate of substrate (low affinity state), while in the ADP-bound state exchange is much slower (high affinity state). During the Hsp70 cycle, the chaperone switches between the ATP-bound state (open conformation) and the ADP-bound state (closed conformation) by major conformational rearrangements involving mainly the lid domain. Ssb cooperates with a specific Hsp40/Hsp70 co-chaperone termed the ribosome-associated complex (RAC), which stimulates the ATPase activity of the ribosome-associated pool of Ssbs and switches it to the high affinity substrate binding state. Hsp110 chaperone SSE1 and FES1 act as nucleotide exchange factors that cause substrate release.</text>
</comment>
<comment type="catalytic activity">
    <reaction evidence="2">
        <text>ATP + H2O = ADP + phosphate + H(+)</text>
        <dbReference type="Rhea" id="RHEA:13065"/>
        <dbReference type="ChEBI" id="CHEBI:15377"/>
        <dbReference type="ChEBI" id="CHEBI:15378"/>
        <dbReference type="ChEBI" id="CHEBI:30616"/>
        <dbReference type="ChEBI" id="CHEBI:43474"/>
        <dbReference type="ChEBI" id="CHEBI:456216"/>
        <dbReference type="EC" id="3.6.4.10"/>
    </reaction>
</comment>
<comment type="subunit">
    <text evidence="2">Binds to ribosomes. Binds close to the ribosomal tunnel exit via contacts with both ribosomal proteins and rRNA. Directly interacts with nascent polypeptides. This interaction is dependent on the ribosome-associated complex (RAC). Interacts with SSE1. Interacts with FES1.</text>
</comment>
<comment type="subcellular location">
    <subcellularLocation>
        <location evidence="2">Cytoplasm</location>
    </subcellularLocation>
    <text evidence="2">Associated with translating ribosomes.</text>
</comment>
<comment type="similarity">
    <text evidence="3">Belongs to the heat shock protein 70 family. Ssb-type Hsp70 subfamily.</text>
</comment>
<sequence>MADGVFQGAIGIDLGTTYSCVATYDSAVEIIANEQGNRVTPSFVAFTSEERLIGDAAKNQAALNPKNTVFDAKRLIGRAFDDESVQKDIKSWPFKVVESNGQPLIEVEYLDETKTFSPQEISSMVLTKMKEIAEAKIGKKVEKAVVTVPAYFNDAQRQATKDAGAIAGLNVLRIINEPTAAAIAYGLGAGKSEKERHVLIFDLGGGTFDVSLLNITGGVFTVKATAGDTHLGGQDFDTNLLEHFKKEFQKKTGNDISSDARALRRLRTACERAKRSLSSGTQTTVEIDSLFDGEDFSANITRARFEDINSALFKSTLEPVEQVLKDAKISKSQVDEVVLVGGSTRIPKVQKLLSDFFDGKQLEKSINPDEAVAYGAAVQGAILTGQSTNDDTKDLLLLDVIPLSLGVAMQGNVFAPVVPRNTTVPTIKRRTFTTVADHQTTVQFPVYQGERVNCTENTLLGEFDLKNIPPMQAGEPVLEAIFEVDANGILKVTAVEKSTGRSANITISNSIGRLSTEEIEKMISDAEKFKSSDDAFAKRHEQKQKLEAYVASVESTVTDPVLSAKLKKSAKDKIEAALSDALQTLEIEESSADDYRKAELALKRAVTKGMATR</sequence>
<protein>
    <recommendedName>
        <fullName>Ribosome-associated molecular chaperone SSB1</fullName>
        <ecNumber>3.6.4.10</ecNumber>
    </recommendedName>
    <alternativeName>
        <fullName>Heat shock protein SSB1</fullName>
    </alternativeName>
    <alternativeName>
        <fullName>Hsp70 chaperone Ssb</fullName>
    </alternativeName>
</protein>
<gene>
    <name type="primary">SSB1</name>
    <name type="synonym">HSP70B</name>
    <name type="ORF">CAWG_02101</name>
</gene>
<keyword id="KW-0067">ATP-binding</keyword>
<keyword id="KW-0143">Chaperone</keyword>
<keyword id="KW-0963">Cytoplasm</keyword>
<keyword id="KW-0378">Hydrolase</keyword>
<keyword id="KW-0547">Nucleotide-binding</keyword>
<keyword id="KW-0648">Protein biosynthesis</keyword>
<accession>P87222</accession>
<accession>C4YML8</accession>